<organism>
    <name type="scientific">Enterobacter sp. (strain 638)</name>
    <dbReference type="NCBI Taxonomy" id="399742"/>
    <lineage>
        <taxon>Bacteria</taxon>
        <taxon>Pseudomonadati</taxon>
        <taxon>Pseudomonadota</taxon>
        <taxon>Gammaproteobacteria</taxon>
        <taxon>Enterobacterales</taxon>
        <taxon>Enterobacteriaceae</taxon>
        <taxon>Enterobacter</taxon>
    </lineage>
</organism>
<gene>
    <name evidence="1" type="primary">glyQ</name>
    <name type="ordered locus">Ent638_0162</name>
</gene>
<sequence>MQKFDTKTFQGLILTLQDYWARQGCTIVQPLDMEVGAGTSHPMTSLRALGPEPMATAYVQPSRRPTDGRYGENPNRLQHYYQFQVVIKPSPDNIQELYLGSLKELGVDPTIHDIRFVEDNWENPTLGAWGLGWEVWLNGMEVTQFTYFQQVGGLECKPITGEITYGLERLAMYIQGVDSVYDLVWSDGPLGKTTYGDVFHQNEVEQSTYNFEYADVDFLFTCFEQYEKEAQQLLALETPLPLPAYERILKAAHSFNLLDARKAISVTERQRYILRIRTLTKAVAEAYYASREALGFPMCNRNK</sequence>
<protein>
    <recommendedName>
        <fullName evidence="1">Glycine--tRNA ligase alpha subunit</fullName>
        <ecNumber evidence="1">6.1.1.14</ecNumber>
    </recommendedName>
    <alternativeName>
        <fullName evidence="1">Glycyl-tRNA synthetase alpha subunit</fullName>
        <shortName evidence="1">GlyRS</shortName>
    </alternativeName>
</protein>
<dbReference type="EC" id="6.1.1.14" evidence="1"/>
<dbReference type="EMBL" id="CP000653">
    <property type="protein sequence ID" value="ABP58852.1"/>
    <property type="molecule type" value="Genomic_DNA"/>
</dbReference>
<dbReference type="RefSeq" id="WP_011915428.1">
    <property type="nucleotide sequence ID" value="NC_009436.1"/>
</dbReference>
<dbReference type="SMR" id="A4W572"/>
<dbReference type="STRING" id="399742.Ent638_0162"/>
<dbReference type="GeneID" id="97599766"/>
<dbReference type="KEGG" id="ent:Ent638_0162"/>
<dbReference type="eggNOG" id="COG0752">
    <property type="taxonomic scope" value="Bacteria"/>
</dbReference>
<dbReference type="HOGENOM" id="CLU_057066_1_0_6"/>
<dbReference type="OrthoDB" id="9802183at2"/>
<dbReference type="Proteomes" id="UP000000230">
    <property type="component" value="Chromosome"/>
</dbReference>
<dbReference type="GO" id="GO:0005829">
    <property type="term" value="C:cytosol"/>
    <property type="evidence" value="ECO:0007669"/>
    <property type="project" value="TreeGrafter"/>
</dbReference>
<dbReference type="GO" id="GO:0005524">
    <property type="term" value="F:ATP binding"/>
    <property type="evidence" value="ECO:0007669"/>
    <property type="project" value="UniProtKB-UniRule"/>
</dbReference>
<dbReference type="GO" id="GO:0004820">
    <property type="term" value="F:glycine-tRNA ligase activity"/>
    <property type="evidence" value="ECO:0007669"/>
    <property type="project" value="UniProtKB-UniRule"/>
</dbReference>
<dbReference type="GO" id="GO:0006426">
    <property type="term" value="P:glycyl-tRNA aminoacylation"/>
    <property type="evidence" value="ECO:0007669"/>
    <property type="project" value="UniProtKB-UniRule"/>
</dbReference>
<dbReference type="CDD" id="cd00733">
    <property type="entry name" value="GlyRS_alpha_core"/>
    <property type="match status" value="1"/>
</dbReference>
<dbReference type="FunFam" id="1.20.58.180:FF:000001">
    <property type="entry name" value="Glycine--tRNA ligase alpha subunit"/>
    <property type="match status" value="1"/>
</dbReference>
<dbReference type="FunFam" id="3.30.930.10:FF:000006">
    <property type="entry name" value="Glycine--tRNA ligase alpha subunit"/>
    <property type="match status" value="1"/>
</dbReference>
<dbReference type="Gene3D" id="3.30.930.10">
    <property type="entry name" value="Bira Bifunctional Protein, Domain 2"/>
    <property type="match status" value="1"/>
</dbReference>
<dbReference type="Gene3D" id="1.20.58.180">
    <property type="entry name" value="Class II aaRS and biotin synthetases, domain 2"/>
    <property type="match status" value="1"/>
</dbReference>
<dbReference type="HAMAP" id="MF_00254">
    <property type="entry name" value="Gly_tRNA_synth_alpha"/>
    <property type="match status" value="1"/>
</dbReference>
<dbReference type="InterPro" id="IPR045864">
    <property type="entry name" value="aa-tRNA-synth_II/BPL/LPL"/>
</dbReference>
<dbReference type="InterPro" id="IPR006194">
    <property type="entry name" value="Gly-tRNA-synth_heterodimer"/>
</dbReference>
<dbReference type="InterPro" id="IPR002310">
    <property type="entry name" value="Gly-tRNA_ligase_asu"/>
</dbReference>
<dbReference type="NCBIfam" id="TIGR00388">
    <property type="entry name" value="glyQ"/>
    <property type="match status" value="1"/>
</dbReference>
<dbReference type="NCBIfam" id="NF006827">
    <property type="entry name" value="PRK09348.1"/>
    <property type="match status" value="1"/>
</dbReference>
<dbReference type="PANTHER" id="PTHR30075:SF2">
    <property type="entry name" value="GLYCINE--TRNA LIGASE, CHLOROPLASTIC_MITOCHONDRIAL 2"/>
    <property type="match status" value="1"/>
</dbReference>
<dbReference type="PANTHER" id="PTHR30075">
    <property type="entry name" value="GLYCYL-TRNA SYNTHETASE"/>
    <property type="match status" value="1"/>
</dbReference>
<dbReference type="Pfam" id="PF02091">
    <property type="entry name" value="tRNA-synt_2e"/>
    <property type="match status" value="1"/>
</dbReference>
<dbReference type="PRINTS" id="PR01044">
    <property type="entry name" value="TRNASYNTHGA"/>
</dbReference>
<dbReference type="SUPFAM" id="SSF55681">
    <property type="entry name" value="Class II aaRS and biotin synthetases"/>
    <property type="match status" value="1"/>
</dbReference>
<dbReference type="PROSITE" id="PS50861">
    <property type="entry name" value="AA_TRNA_LIGASE_II_GLYAB"/>
    <property type="match status" value="1"/>
</dbReference>
<evidence type="ECO:0000255" key="1">
    <source>
        <dbReference type="HAMAP-Rule" id="MF_00254"/>
    </source>
</evidence>
<name>SYGA_ENT38</name>
<comment type="catalytic activity">
    <reaction evidence="1">
        <text>tRNA(Gly) + glycine + ATP = glycyl-tRNA(Gly) + AMP + diphosphate</text>
        <dbReference type="Rhea" id="RHEA:16013"/>
        <dbReference type="Rhea" id="RHEA-COMP:9664"/>
        <dbReference type="Rhea" id="RHEA-COMP:9683"/>
        <dbReference type="ChEBI" id="CHEBI:30616"/>
        <dbReference type="ChEBI" id="CHEBI:33019"/>
        <dbReference type="ChEBI" id="CHEBI:57305"/>
        <dbReference type="ChEBI" id="CHEBI:78442"/>
        <dbReference type="ChEBI" id="CHEBI:78522"/>
        <dbReference type="ChEBI" id="CHEBI:456215"/>
        <dbReference type="EC" id="6.1.1.14"/>
    </reaction>
</comment>
<comment type="subunit">
    <text evidence="1">Tetramer of two alpha and two beta subunits.</text>
</comment>
<comment type="subcellular location">
    <subcellularLocation>
        <location evidence="1">Cytoplasm</location>
    </subcellularLocation>
</comment>
<comment type="similarity">
    <text evidence="1">Belongs to the class-II aminoacyl-tRNA synthetase family.</text>
</comment>
<keyword id="KW-0030">Aminoacyl-tRNA synthetase</keyword>
<keyword id="KW-0067">ATP-binding</keyword>
<keyword id="KW-0963">Cytoplasm</keyword>
<keyword id="KW-0436">Ligase</keyword>
<keyword id="KW-0547">Nucleotide-binding</keyword>
<keyword id="KW-0648">Protein biosynthesis</keyword>
<accession>A4W572</accession>
<proteinExistence type="inferred from homology"/>
<feature type="chain" id="PRO_1000059053" description="Glycine--tRNA ligase alpha subunit">
    <location>
        <begin position="1"/>
        <end position="303"/>
    </location>
</feature>
<reference key="1">
    <citation type="journal article" date="2010" name="PLoS Genet.">
        <title>Genome sequence of the plant growth promoting endophytic bacterium Enterobacter sp. 638.</title>
        <authorList>
            <person name="Taghavi S."/>
            <person name="van der Lelie D."/>
            <person name="Hoffman A."/>
            <person name="Zhang Y.B."/>
            <person name="Walla M.D."/>
            <person name="Vangronsveld J."/>
            <person name="Newman L."/>
            <person name="Monchy S."/>
        </authorList>
    </citation>
    <scope>NUCLEOTIDE SEQUENCE [LARGE SCALE GENOMIC DNA]</scope>
    <source>
        <strain>638</strain>
    </source>
</reference>